<comment type="similarity">
    <text evidence="1">Belongs to the AIM32 family.</text>
</comment>
<reference key="1">
    <citation type="submission" date="2005-03" db="EMBL/GenBank/DDBJ databases">
        <title>Annotation of the Saccharomyces cerevisiae RM11-1a genome.</title>
        <authorList>
            <consortium name="The Broad Institute Genome Sequencing Platform"/>
            <person name="Birren B.W."/>
            <person name="Lander E.S."/>
            <person name="Galagan J.E."/>
            <person name="Nusbaum C."/>
            <person name="Devon K."/>
            <person name="Cuomo C."/>
            <person name="Jaffe D.B."/>
            <person name="Butler J."/>
            <person name="Alvarez P."/>
            <person name="Gnerre S."/>
            <person name="Grabherr M."/>
            <person name="Kleber M."/>
            <person name="Mauceli E.W."/>
            <person name="Brockman W."/>
            <person name="MacCallum I.A."/>
            <person name="Rounsley S."/>
            <person name="Young S.K."/>
            <person name="LaButti K."/>
            <person name="Pushparaj V."/>
            <person name="DeCaprio D."/>
            <person name="Crawford M."/>
            <person name="Koehrsen M."/>
            <person name="Engels R."/>
            <person name="Montgomery P."/>
            <person name="Pearson M."/>
            <person name="Howarth C."/>
            <person name="Larson L."/>
            <person name="Luoma S."/>
            <person name="White J."/>
            <person name="O'Leary S."/>
            <person name="Kodira C.D."/>
            <person name="Zeng Q."/>
            <person name="Yandava C."/>
            <person name="Alvarado L."/>
            <person name="Pratt S."/>
            <person name="Kruglyak L."/>
        </authorList>
    </citation>
    <scope>NUCLEOTIDE SEQUENCE [LARGE SCALE GENOMIC DNA]</scope>
    <source>
        <strain>RM11-1a</strain>
    </source>
</reference>
<organism>
    <name type="scientific">Saccharomyces cerevisiae (strain RM11-1a)</name>
    <name type="common">Baker's yeast</name>
    <dbReference type="NCBI Taxonomy" id="285006"/>
    <lineage>
        <taxon>Eukaryota</taxon>
        <taxon>Fungi</taxon>
        <taxon>Dikarya</taxon>
        <taxon>Ascomycota</taxon>
        <taxon>Saccharomycotina</taxon>
        <taxon>Saccharomycetes</taxon>
        <taxon>Saccharomycetales</taxon>
        <taxon>Saccharomycetaceae</taxon>
        <taxon>Saccharomyces</taxon>
    </lineage>
</organism>
<dbReference type="EMBL" id="CH408047">
    <property type="protein sequence ID" value="EDV11460.1"/>
    <property type="molecule type" value="Genomic_DNA"/>
</dbReference>
<dbReference type="HOGENOM" id="CLU_044499_1_0_1"/>
<dbReference type="OrthoDB" id="35083at4893"/>
<dbReference type="Proteomes" id="UP000008335">
    <property type="component" value="Unassembled WGS sequence"/>
</dbReference>
<dbReference type="CDD" id="cd03062">
    <property type="entry name" value="TRX_Fd_Sucrase"/>
    <property type="match status" value="1"/>
</dbReference>
<dbReference type="InterPro" id="IPR009737">
    <property type="entry name" value="Aim32/Apd1-like"/>
</dbReference>
<dbReference type="InterPro" id="IPR036249">
    <property type="entry name" value="Thioredoxin-like_sf"/>
</dbReference>
<dbReference type="PANTHER" id="PTHR31902">
    <property type="entry name" value="ACTIN PATCHES DISTAL PROTEIN 1"/>
    <property type="match status" value="1"/>
</dbReference>
<dbReference type="PANTHER" id="PTHR31902:SF7">
    <property type="entry name" value="ALTERED INHERITANCE OF MITOCHONDRIA PROTEIN 32"/>
    <property type="match status" value="1"/>
</dbReference>
<dbReference type="Pfam" id="PF06999">
    <property type="entry name" value="Suc_Fer-like"/>
    <property type="match status" value="1"/>
</dbReference>
<dbReference type="SUPFAM" id="SSF52833">
    <property type="entry name" value="Thioredoxin-like"/>
    <property type="match status" value="1"/>
</dbReference>
<proteinExistence type="inferred from homology"/>
<name>AIM32_YEAS1</name>
<gene>
    <name type="primary">AIM32</name>
    <name type="ORF">SCRG_01850</name>
</gene>
<evidence type="ECO:0000305" key="1"/>
<sequence>MLRITVKTLQQRASFHHSFKHISVPDLHTRAQNDQTNCYCQEINARLPSKTDPLDPHIKLPHRTPNYNKHVLLLSPGDRFAQPWKVAWNHNLDTNTNRPYNAISKLRSHLGGSPGILINAAHLQNEFIPRPKQHDEWLYFFVIPDMKLYVIKETDIEEFASFLDEGAIQAPKLSFQDYLSGKAKASQQVHEVHHRKLTRFQGETFLRDWNLVCGHYKRDAKCGEMGPDIIAAFQDEKLFPENNLALISHIGGHIFAGNVIFYKLFGREKMQNKLDSLWFGKVYPHNLKLLCENLENGKIIDEMYRGGISMN</sequence>
<feature type="chain" id="PRO_0000399702" description="Altered inheritance of mitochondria protein 32">
    <location>
        <begin position="1"/>
        <end position="311"/>
    </location>
</feature>
<protein>
    <recommendedName>
        <fullName>Altered inheritance of mitochondria protein 32</fullName>
    </recommendedName>
</protein>
<accession>B3LLK7</accession>